<sequence length="280" mass="30819">MPELPEVETTRRKIEPLLRGKTIERIVHDAPHRYRNTERAHGRQVRGLTRRGKYLLLHLAAADAAEDEPHDLELIVHLGMTGGFRLEEGPHTRVTFELGSGEKLYFNDPRRFGKVVAVAPGDYASMPTLAAMGPEPLSDDFTEAEFVALAARCGPVKPWLLSQKPVSGVGNIYADESLWHARLHPAQTRLNADEAGRLYRAIREVMAAAVDKGGSSLGNGVGNYRQHDGEGGGFQHSHHVYGRAGQPCDRCGTPIEKIVLGQRGTHFCPVCQPLRTDRSA</sequence>
<reference key="1">
    <citation type="journal article" date="1999" name="Science">
        <title>Genome sequence of the radioresistant bacterium Deinococcus radiodurans R1.</title>
        <authorList>
            <person name="White O."/>
            <person name="Eisen J.A."/>
            <person name="Heidelberg J.F."/>
            <person name="Hickey E.K."/>
            <person name="Peterson J.D."/>
            <person name="Dodson R.J."/>
            <person name="Haft D.H."/>
            <person name="Gwinn M.L."/>
            <person name="Nelson W.C."/>
            <person name="Richardson D.L."/>
            <person name="Moffat K.S."/>
            <person name="Qin H."/>
            <person name="Jiang L."/>
            <person name="Pamphile W."/>
            <person name="Crosby M."/>
            <person name="Shen M."/>
            <person name="Vamathevan J.J."/>
            <person name="Lam P."/>
            <person name="McDonald L.A."/>
            <person name="Utterback T.R."/>
            <person name="Zalewski C."/>
            <person name="Makarova K.S."/>
            <person name="Aravind L."/>
            <person name="Daly M.J."/>
            <person name="Minton K.W."/>
            <person name="Fleischmann R.D."/>
            <person name="Ketchum K.A."/>
            <person name="Nelson K.E."/>
            <person name="Salzberg S.L."/>
            <person name="Smith H.O."/>
            <person name="Venter J.C."/>
            <person name="Fraser C.M."/>
        </authorList>
    </citation>
    <scope>NUCLEOTIDE SEQUENCE [LARGE SCALE GENOMIC DNA]</scope>
    <source>
        <strain>ATCC 13939 / DSM 20539 / JCM 16871 / CCUG 27074 / LMG 4051 / NBRC 15346 / NCIMB 9279 / VKM B-1422 / R1</strain>
    </source>
</reference>
<proteinExistence type="inferred from homology"/>
<feature type="initiator methionine" description="Removed" evidence="1">
    <location>
        <position position="1"/>
    </location>
</feature>
<feature type="chain" id="PRO_0000170821" description="Formamidopyrimidine-DNA glycosylase">
    <location>
        <begin position="2"/>
        <end position="280"/>
    </location>
</feature>
<feature type="zinc finger region" description="FPG-type">
    <location>
        <begin position="239"/>
        <end position="273"/>
    </location>
</feature>
<feature type="active site" description="Schiff-base intermediate with DNA" evidence="1">
    <location>
        <position position="2"/>
    </location>
</feature>
<feature type="active site" description="Proton donor" evidence="1">
    <location>
        <position position="3"/>
    </location>
</feature>
<feature type="active site" description="Proton donor; for beta-elimination activity" evidence="1">
    <location>
        <position position="53"/>
    </location>
</feature>
<feature type="active site" description="Proton donor; for delta-elimination activity" evidence="1">
    <location>
        <position position="263"/>
    </location>
</feature>
<feature type="binding site" evidence="1">
    <location>
        <position position="91"/>
    </location>
    <ligand>
        <name>DNA</name>
        <dbReference type="ChEBI" id="CHEBI:16991"/>
    </ligand>
</feature>
<feature type="binding site" evidence="1">
    <location>
        <position position="110"/>
    </location>
    <ligand>
        <name>DNA</name>
        <dbReference type="ChEBI" id="CHEBI:16991"/>
    </ligand>
</feature>
<feature type="binding site" evidence="1">
    <location>
        <position position="152"/>
    </location>
    <ligand>
        <name>DNA</name>
        <dbReference type="ChEBI" id="CHEBI:16991"/>
    </ligand>
</feature>
<gene>
    <name type="primary">mutM</name>
    <name type="synonym">fpg</name>
    <name type="ordered locus">DR_0493</name>
</gene>
<comment type="function">
    <text evidence="1">Involved in base excision repair of DNA damaged by oxidation or by mutagenic agents. Acts as a DNA glycosylase that recognizes and removes damaged bases. Has a preference for oxidized purines, such as 7,8-dihydro-8-oxoguanine (8-oxoG). Has AP (apurinic/apyrimidinic) lyase activity and introduces nicks in the DNA strand. Cleaves the DNA backbone by beta-delta elimination to generate a single-strand break at the site of the removed base with both 3'- and 5'-phosphates (By similarity).</text>
</comment>
<comment type="catalytic activity">
    <reaction>
        <text>Hydrolysis of DNA containing ring-opened 7-methylguanine residues, releasing 2,6-diamino-4-hydroxy-5-(N-methyl)formamidopyrimidine.</text>
        <dbReference type="EC" id="3.2.2.23"/>
    </reaction>
</comment>
<comment type="catalytic activity">
    <reaction>
        <text>2'-deoxyribonucleotide-(2'-deoxyribose 5'-phosphate)-2'-deoxyribonucleotide-DNA = a 3'-end 2'-deoxyribonucleotide-(2,3-dehydro-2,3-deoxyribose 5'-phosphate)-DNA + a 5'-end 5'-phospho-2'-deoxyribonucleoside-DNA + H(+)</text>
        <dbReference type="Rhea" id="RHEA:66592"/>
        <dbReference type="Rhea" id="RHEA-COMP:13180"/>
        <dbReference type="Rhea" id="RHEA-COMP:16897"/>
        <dbReference type="Rhea" id="RHEA-COMP:17067"/>
        <dbReference type="ChEBI" id="CHEBI:15378"/>
        <dbReference type="ChEBI" id="CHEBI:136412"/>
        <dbReference type="ChEBI" id="CHEBI:157695"/>
        <dbReference type="ChEBI" id="CHEBI:167181"/>
        <dbReference type="EC" id="4.2.99.18"/>
    </reaction>
</comment>
<comment type="cofactor">
    <cofactor evidence="1">
        <name>Zn(2+)</name>
        <dbReference type="ChEBI" id="CHEBI:29105"/>
    </cofactor>
    <text evidence="1">Binds 1 zinc ion per subunit.</text>
</comment>
<comment type="subunit">
    <text evidence="1">Monomer.</text>
</comment>
<comment type="similarity">
    <text evidence="2">Belongs to the FPG family.</text>
</comment>
<comment type="sequence caution" evidence="2">
    <conflict type="erroneous initiation">
        <sequence resource="EMBL-CDS" id="AAF10070"/>
    </conflict>
</comment>
<name>FPG_DEIRA</name>
<dbReference type="EC" id="3.2.2.23"/>
<dbReference type="EC" id="4.2.99.18"/>
<dbReference type="EMBL" id="AE000513">
    <property type="protein sequence ID" value="AAF10070.1"/>
    <property type="status" value="ALT_INIT"/>
    <property type="molecule type" value="Genomic_DNA"/>
</dbReference>
<dbReference type="PIR" id="H75512">
    <property type="entry name" value="H75512"/>
</dbReference>
<dbReference type="RefSeq" id="NP_294216.1">
    <property type="nucleotide sequence ID" value="NC_001263.1"/>
</dbReference>
<dbReference type="RefSeq" id="WP_027479550.1">
    <property type="nucleotide sequence ID" value="NC_001263.1"/>
</dbReference>
<dbReference type="SMR" id="Q9RX22"/>
<dbReference type="FunCoup" id="Q9RX22">
    <property type="interactions" value="317"/>
</dbReference>
<dbReference type="STRING" id="243230.DR_0493"/>
<dbReference type="PaxDb" id="243230-DR_0493"/>
<dbReference type="EnsemblBacteria" id="AAF10070">
    <property type="protein sequence ID" value="AAF10070"/>
    <property type="gene ID" value="DR_0493"/>
</dbReference>
<dbReference type="GeneID" id="69516728"/>
<dbReference type="KEGG" id="dra:DR_0493"/>
<dbReference type="PATRIC" id="fig|243230.17.peg.671"/>
<dbReference type="eggNOG" id="COG0266">
    <property type="taxonomic scope" value="Bacteria"/>
</dbReference>
<dbReference type="HOGENOM" id="CLU_038423_1_2_0"/>
<dbReference type="InParanoid" id="Q9RX22"/>
<dbReference type="OrthoDB" id="9800855at2"/>
<dbReference type="Proteomes" id="UP000002524">
    <property type="component" value="Chromosome 1"/>
</dbReference>
<dbReference type="GO" id="GO:0034039">
    <property type="term" value="F:8-oxo-7,8-dihydroguanine DNA N-glycosylase activity"/>
    <property type="evidence" value="ECO:0000318"/>
    <property type="project" value="GO_Central"/>
</dbReference>
<dbReference type="GO" id="GO:0140078">
    <property type="term" value="F:class I DNA-(apurinic or apyrimidinic site) endonuclease activity"/>
    <property type="evidence" value="ECO:0007669"/>
    <property type="project" value="UniProtKB-EC"/>
</dbReference>
<dbReference type="GO" id="GO:0003684">
    <property type="term" value="F:damaged DNA binding"/>
    <property type="evidence" value="ECO:0007669"/>
    <property type="project" value="InterPro"/>
</dbReference>
<dbReference type="GO" id="GO:0003906">
    <property type="term" value="F:DNA-(apurinic or apyrimidinic site) endonuclease activity"/>
    <property type="evidence" value="ECO:0000318"/>
    <property type="project" value="GO_Central"/>
</dbReference>
<dbReference type="GO" id="GO:0008270">
    <property type="term" value="F:zinc ion binding"/>
    <property type="evidence" value="ECO:0007669"/>
    <property type="project" value="UniProtKB-UniRule"/>
</dbReference>
<dbReference type="GO" id="GO:0006284">
    <property type="term" value="P:base-excision repair"/>
    <property type="evidence" value="ECO:0000318"/>
    <property type="project" value="GO_Central"/>
</dbReference>
<dbReference type="CDD" id="cd08966">
    <property type="entry name" value="EcFpg-like_N"/>
    <property type="match status" value="1"/>
</dbReference>
<dbReference type="FunFam" id="1.10.8.50:FF:000003">
    <property type="entry name" value="Formamidopyrimidine-DNA glycosylase"/>
    <property type="match status" value="1"/>
</dbReference>
<dbReference type="Gene3D" id="1.10.8.50">
    <property type="match status" value="1"/>
</dbReference>
<dbReference type="Gene3D" id="3.20.190.10">
    <property type="entry name" value="MutM-like, N-terminal"/>
    <property type="match status" value="1"/>
</dbReference>
<dbReference type="HAMAP" id="MF_00103">
    <property type="entry name" value="Fapy_DNA_glycosyl"/>
    <property type="match status" value="1"/>
</dbReference>
<dbReference type="InterPro" id="IPR015886">
    <property type="entry name" value="DNA_glyclase/AP_lyase_DNA-bd"/>
</dbReference>
<dbReference type="InterPro" id="IPR015887">
    <property type="entry name" value="DNA_glyclase_Znf_dom_DNA_BS"/>
</dbReference>
<dbReference type="InterPro" id="IPR020629">
    <property type="entry name" value="Formamido-pyr_DNA_Glyclase"/>
</dbReference>
<dbReference type="InterPro" id="IPR012319">
    <property type="entry name" value="FPG_cat"/>
</dbReference>
<dbReference type="InterPro" id="IPR035937">
    <property type="entry name" value="MutM-like_N-ter"/>
</dbReference>
<dbReference type="InterPro" id="IPR010979">
    <property type="entry name" value="Ribosomal_uS13-like_H2TH"/>
</dbReference>
<dbReference type="InterPro" id="IPR000214">
    <property type="entry name" value="Znf_DNA_glyclase/AP_lyase"/>
</dbReference>
<dbReference type="InterPro" id="IPR010663">
    <property type="entry name" value="Znf_FPG/IleRS"/>
</dbReference>
<dbReference type="NCBIfam" id="TIGR00577">
    <property type="entry name" value="fpg"/>
    <property type="match status" value="1"/>
</dbReference>
<dbReference type="NCBIfam" id="NF002211">
    <property type="entry name" value="PRK01103.1"/>
    <property type="match status" value="1"/>
</dbReference>
<dbReference type="NCBIfam" id="NF011386">
    <property type="entry name" value="PRK14811.1"/>
    <property type="match status" value="1"/>
</dbReference>
<dbReference type="PANTHER" id="PTHR22993">
    <property type="entry name" value="FORMAMIDOPYRIMIDINE-DNA GLYCOSYLASE"/>
    <property type="match status" value="1"/>
</dbReference>
<dbReference type="PANTHER" id="PTHR22993:SF9">
    <property type="entry name" value="FORMAMIDOPYRIMIDINE-DNA GLYCOSYLASE"/>
    <property type="match status" value="1"/>
</dbReference>
<dbReference type="Pfam" id="PF01149">
    <property type="entry name" value="Fapy_DNA_glyco"/>
    <property type="match status" value="1"/>
</dbReference>
<dbReference type="Pfam" id="PF06831">
    <property type="entry name" value="H2TH"/>
    <property type="match status" value="1"/>
</dbReference>
<dbReference type="Pfam" id="PF06827">
    <property type="entry name" value="zf-FPG_IleRS"/>
    <property type="match status" value="1"/>
</dbReference>
<dbReference type="SMART" id="SM00898">
    <property type="entry name" value="Fapy_DNA_glyco"/>
    <property type="match status" value="1"/>
</dbReference>
<dbReference type="SMART" id="SM01232">
    <property type="entry name" value="H2TH"/>
    <property type="match status" value="1"/>
</dbReference>
<dbReference type="SUPFAM" id="SSF57716">
    <property type="entry name" value="Glucocorticoid receptor-like (DNA-binding domain)"/>
    <property type="match status" value="1"/>
</dbReference>
<dbReference type="SUPFAM" id="SSF81624">
    <property type="entry name" value="N-terminal domain of MutM-like DNA repair proteins"/>
    <property type="match status" value="1"/>
</dbReference>
<dbReference type="SUPFAM" id="SSF46946">
    <property type="entry name" value="S13-like H2TH domain"/>
    <property type="match status" value="1"/>
</dbReference>
<dbReference type="PROSITE" id="PS51068">
    <property type="entry name" value="FPG_CAT"/>
    <property type="match status" value="1"/>
</dbReference>
<dbReference type="PROSITE" id="PS01242">
    <property type="entry name" value="ZF_FPG_1"/>
    <property type="match status" value="1"/>
</dbReference>
<dbReference type="PROSITE" id="PS51066">
    <property type="entry name" value="ZF_FPG_2"/>
    <property type="match status" value="1"/>
</dbReference>
<protein>
    <recommendedName>
        <fullName>Formamidopyrimidine-DNA glycosylase</fullName>
        <shortName>Fapy-DNA glycosylase</shortName>
        <ecNumber>3.2.2.23</ecNumber>
    </recommendedName>
    <alternativeName>
        <fullName>DNA-(apurinic or apyrimidinic site) lyase MutM</fullName>
        <shortName>AP lyase MutM</shortName>
        <ecNumber>4.2.99.18</ecNumber>
    </alternativeName>
</protein>
<keyword id="KW-0227">DNA damage</keyword>
<keyword id="KW-0234">DNA repair</keyword>
<keyword id="KW-0238">DNA-binding</keyword>
<keyword id="KW-0326">Glycosidase</keyword>
<keyword id="KW-0378">Hydrolase</keyword>
<keyword id="KW-0456">Lyase</keyword>
<keyword id="KW-0479">Metal-binding</keyword>
<keyword id="KW-0511">Multifunctional enzyme</keyword>
<keyword id="KW-1185">Reference proteome</keyword>
<keyword id="KW-0862">Zinc</keyword>
<keyword id="KW-0863">Zinc-finger</keyword>
<organism>
    <name type="scientific">Deinococcus radiodurans (strain ATCC 13939 / DSM 20539 / JCM 16871 / CCUG 27074 / LMG 4051 / NBRC 15346 / NCIMB 9279 / VKM B-1422 / R1)</name>
    <dbReference type="NCBI Taxonomy" id="243230"/>
    <lineage>
        <taxon>Bacteria</taxon>
        <taxon>Thermotogati</taxon>
        <taxon>Deinococcota</taxon>
        <taxon>Deinococci</taxon>
        <taxon>Deinococcales</taxon>
        <taxon>Deinococcaceae</taxon>
        <taxon>Deinococcus</taxon>
    </lineage>
</organism>
<evidence type="ECO:0000250" key="1"/>
<evidence type="ECO:0000305" key="2"/>
<accession>Q9RX22</accession>